<name>VATB_STRP3</name>
<comment type="function">
    <text evidence="1">Produces ATP from ADP in the presence of a proton gradient across the membrane. The V-type beta chain is a regulatory subunit.</text>
</comment>
<comment type="similarity">
    <text evidence="1">Belongs to the ATPase alpha/beta chains family.</text>
</comment>
<evidence type="ECO:0000255" key="1">
    <source>
        <dbReference type="HAMAP-Rule" id="MF_00310"/>
    </source>
</evidence>
<gene>
    <name evidence="1" type="primary">atpB</name>
    <name type="ordered locus">SpyM3_0121</name>
</gene>
<reference key="1">
    <citation type="journal article" date="2002" name="Proc. Natl. Acad. Sci. U.S.A.">
        <title>Genome sequence of a serotype M3 strain of group A Streptococcus: phage-encoded toxins, the high-virulence phenotype, and clone emergence.</title>
        <authorList>
            <person name="Beres S.B."/>
            <person name="Sylva G.L."/>
            <person name="Barbian K.D."/>
            <person name="Lei B."/>
            <person name="Hoff J.S."/>
            <person name="Mammarella N.D."/>
            <person name="Liu M.-Y."/>
            <person name="Smoot J.C."/>
            <person name="Porcella S.F."/>
            <person name="Parkins L.D."/>
            <person name="Campbell D.S."/>
            <person name="Smith T.M."/>
            <person name="McCormick J.K."/>
            <person name="Leung D.Y.M."/>
            <person name="Schlievert P.M."/>
            <person name="Musser J.M."/>
        </authorList>
    </citation>
    <scope>NUCLEOTIDE SEQUENCE [LARGE SCALE GENOMIC DNA]</scope>
    <source>
        <strain>ATCC BAA-595 / MGAS315</strain>
    </source>
</reference>
<sequence>MSVLKEYRTVSEVVGPLMIVDQVAGVHYNELVDITLHNGERRKGQVLEVQGDKAMVQLFEGSTGINLAKTKVRFTGHPLELAVSEDMVGRIFDGMGQPIDGGPELIPEKYLDIDGQAINPVARDYPDEFIQTGISAIDHLNTLVRGQKLPVFSGSGLPHNELAAQIARQATVLNSDDNFAVVFAAMGITFEEAEFFMNDLRETGAIDRSVLFINLANDPAIERIATPRIALTTAEYLAYEKGMHVLVIMTDMTNYCEALREVSAARREVPGRRGYPGYLYTNLSTLYERAGRLIGKKGSVTQIPILTMPEDDITHPIPDLTGYITEGQIILSQELYKNGFRPPINVLPSLSRLKDKGSGEGKTRQDHAATMNQLFAAYAQGKQAKELAVVLGESALSETDKLYVAFTNRFEEEYINQGFYTNRSIEESLDLGWELLSILPRTELKRIKDDMLDRYLPKADTTMTKVFVAND</sequence>
<protein>
    <recommendedName>
        <fullName evidence="1">V-type ATP synthase beta chain</fullName>
    </recommendedName>
    <alternativeName>
        <fullName evidence="1">V-ATPase subunit B</fullName>
    </alternativeName>
</protein>
<keyword id="KW-0066">ATP synthesis</keyword>
<keyword id="KW-0375">Hydrogen ion transport</keyword>
<keyword id="KW-0406">Ion transport</keyword>
<keyword id="KW-0813">Transport</keyword>
<proteinExistence type="inferred from homology"/>
<accession>P0DA08</accession>
<accession>Q79YM9</accession>
<accession>Q7CFI7</accession>
<feature type="chain" id="PRO_0000144679" description="V-type ATP synthase beta chain">
    <location>
        <begin position="1"/>
        <end position="471"/>
    </location>
</feature>
<dbReference type="EMBL" id="AE014074">
    <property type="protein sequence ID" value="AAM78728.1"/>
    <property type="molecule type" value="Genomic_DNA"/>
</dbReference>
<dbReference type="RefSeq" id="WP_002986419.1">
    <property type="nucleotide sequence ID" value="NC_004070.1"/>
</dbReference>
<dbReference type="SMR" id="P0DA08"/>
<dbReference type="KEGG" id="spg:SpyM3_0121"/>
<dbReference type="HOGENOM" id="CLU_022916_0_0_9"/>
<dbReference type="Proteomes" id="UP000000564">
    <property type="component" value="Chromosome"/>
</dbReference>
<dbReference type="GO" id="GO:0005524">
    <property type="term" value="F:ATP binding"/>
    <property type="evidence" value="ECO:0007669"/>
    <property type="project" value="UniProtKB-UniRule"/>
</dbReference>
<dbReference type="GO" id="GO:0046933">
    <property type="term" value="F:proton-transporting ATP synthase activity, rotational mechanism"/>
    <property type="evidence" value="ECO:0007669"/>
    <property type="project" value="UniProtKB-UniRule"/>
</dbReference>
<dbReference type="GO" id="GO:0042777">
    <property type="term" value="P:proton motive force-driven plasma membrane ATP synthesis"/>
    <property type="evidence" value="ECO:0007669"/>
    <property type="project" value="UniProtKB-UniRule"/>
</dbReference>
<dbReference type="CDD" id="cd18112">
    <property type="entry name" value="ATP-synt_V_A-type_beta_C"/>
    <property type="match status" value="1"/>
</dbReference>
<dbReference type="CDD" id="cd18118">
    <property type="entry name" value="ATP-synt_V_A-type_beta_N"/>
    <property type="match status" value="1"/>
</dbReference>
<dbReference type="CDD" id="cd01135">
    <property type="entry name" value="V_A-ATPase_B"/>
    <property type="match status" value="1"/>
</dbReference>
<dbReference type="Gene3D" id="3.40.50.12240">
    <property type="match status" value="1"/>
</dbReference>
<dbReference type="HAMAP" id="MF_00310">
    <property type="entry name" value="ATP_synth_B_arch"/>
    <property type="match status" value="1"/>
</dbReference>
<dbReference type="InterPro" id="IPR055190">
    <property type="entry name" value="ATP-synt_VA_C"/>
</dbReference>
<dbReference type="InterPro" id="IPR020003">
    <property type="entry name" value="ATPase_a/bsu_AS"/>
</dbReference>
<dbReference type="InterPro" id="IPR004100">
    <property type="entry name" value="ATPase_F1/V1/A1_a/bsu_N"/>
</dbReference>
<dbReference type="InterPro" id="IPR000194">
    <property type="entry name" value="ATPase_F1/V1/A1_a/bsu_nucl-bd"/>
</dbReference>
<dbReference type="InterPro" id="IPR027417">
    <property type="entry name" value="P-loop_NTPase"/>
</dbReference>
<dbReference type="InterPro" id="IPR022879">
    <property type="entry name" value="V-ATPase_su_B/beta"/>
</dbReference>
<dbReference type="NCBIfam" id="NF003235">
    <property type="entry name" value="PRK04196.1"/>
    <property type="match status" value="1"/>
</dbReference>
<dbReference type="PANTHER" id="PTHR43389">
    <property type="entry name" value="V-TYPE PROTON ATPASE SUBUNIT B"/>
    <property type="match status" value="1"/>
</dbReference>
<dbReference type="PANTHER" id="PTHR43389:SF4">
    <property type="entry name" value="V-TYPE PROTON ATPASE SUBUNIT B"/>
    <property type="match status" value="1"/>
</dbReference>
<dbReference type="Pfam" id="PF00006">
    <property type="entry name" value="ATP-synt_ab"/>
    <property type="match status" value="1"/>
</dbReference>
<dbReference type="Pfam" id="PF02874">
    <property type="entry name" value="ATP-synt_ab_N"/>
    <property type="match status" value="1"/>
</dbReference>
<dbReference type="Pfam" id="PF22919">
    <property type="entry name" value="ATP-synt_VA_C"/>
    <property type="match status" value="1"/>
</dbReference>
<dbReference type="PIRSF" id="PIRSF039114">
    <property type="entry name" value="V-ATPsynth_beta/V-ATPase_B"/>
    <property type="match status" value="1"/>
</dbReference>
<dbReference type="SUPFAM" id="SSF47917">
    <property type="entry name" value="C-terminal domain of alpha and beta subunits of F1 ATP synthase"/>
    <property type="match status" value="1"/>
</dbReference>
<dbReference type="SUPFAM" id="SSF52540">
    <property type="entry name" value="P-loop containing nucleoside triphosphate hydrolases"/>
    <property type="match status" value="1"/>
</dbReference>
<dbReference type="PROSITE" id="PS00152">
    <property type="entry name" value="ATPASE_ALPHA_BETA"/>
    <property type="match status" value="1"/>
</dbReference>
<organism>
    <name type="scientific">Streptococcus pyogenes serotype M3 (strain ATCC BAA-595 / MGAS315)</name>
    <dbReference type="NCBI Taxonomy" id="198466"/>
    <lineage>
        <taxon>Bacteria</taxon>
        <taxon>Bacillati</taxon>
        <taxon>Bacillota</taxon>
        <taxon>Bacilli</taxon>
        <taxon>Lactobacillales</taxon>
        <taxon>Streptococcaceae</taxon>
        <taxon>Streptococcus</taxon>
    </lineage>
</organism>